<sequence>MSTNAIAKRYAKALVQLGSEAGTVDSFNTELDRFSALLTESRDLSAVFANPAYGIESKREVMKELVAKLQLSPMISNLLMLLLERGRISVLPEISQSYGAFADELSGVIRPTLSSGLPLEAGQIEEIRSALAKSTGKKVELKVEVDPSLIGGVVTKIGGKVFDGSVRTQLARIQDILQKG</sequence>
<accession>C6E9F4</accession>
<protein>
    <recommendedName>
        <fullName evidence="1">ATP synthase subunit delta</fullName>
    </recommendedName>
    <alternativeName>
        <fullName evidence="1">ATP synthase F(1) sector subunit delta</fullName>
    </alternativeName>
    <alternativeName>
        <fullName evidence="1">F-type ATPase subunit delta</fullName>
        <shortName evidence="1">F-ATPase subunit delta</shortName>
    </alternativeName>
</protein>
<keyword id="KW-0066">ATP synthesis</keyword>
<keyword id="KW-0997">Cell inner membrane</keyword>
<keyword id="KW-1003">Cell membrane</keyword>
<keyword id="KW-0139">CF(1)</keyword>
<keyword id="KW-0375">Hydrogen ion transport</keyword>
<keyword id="KW-0406">Ion transport</keyword>
<keyword id="KW-0472">Membrane</keyword>
<keyword id="KW-0813">Transport</keyword>
<name>ATPD_GEOSM</name>
<feature type="chain" id="PRO_1000215237" description="ATP synthase subunit delta">
    <location>
        <begin position="1"/>
        <end position="180"/>
    </location>
</feature>
<reference key="1">
    <citation type="submission" date="2009-07" db="EMBL/GenBank/DDBJ databases">
        <title>Complete sequence of Geobacter sp. M21.</title>
        <authorList>
            <consortium name="US DOE Joint Genome Institute"/>
            <person name="Lucas S."/>
            <person name="Copeland A."/>
            <person name="Lapidus A."/>
            <person name="Glavina del Rio T."/>
            <person name="Dalin E."/>
            <person name="Tice H."/>
            <person name="Bruce D."/>
            <person name="Goodwin L."/>
            <person name="Pitluck S."/>
            <person name="Saunders E."/>
            <person name="Brettin T."/>
            <person name="Detter J.C."/>
            <person name="Han C."/>
            <person name="Larimer F."/>
            <person name="Land M."/>
            <person name="Hauser L."/>
            <person name="Kyrpides N."/>
            <person name="Ovchinnikova G."/>
            <person name="Lovley D."/>
        </authorList>
    </citation>
    <scope>NUCLEOTIDE SEQUENCE [LARGE SCALE GENOMIC DNA]</scope>
    <source>
        <strain>M21</strain>
    </source>
</reference>
<proteinExistence type="inferred from homology"/>
<dbReference type="EMBL" id="CP001661">
    <property type="protein sequence ID" value="ACT20054.1"/>
    <property type="molecule type" value="Genomic_DNA"/>
</dbReference>
<dbReference type="SMR" id="C6E9F4"/>
<dbReference type="STRING" id="443144.GM21_4038"/>
<dbReference type="KEGG" id="gem:GM21_4038"/>
<dbReference type="eggNOG" id="COG0712">
    <property type="taxonomic scope" value="Bacteria"/>
</dbReference>
<dbReference type="HOGENOM" id="CLU_085114_1_1_7"/>
<dbReference type="OrthoDB" id="9802471at2"/>
<dbReference type="GO" id="GO:0005886">
    <property type="term" value="C:plasma membrane"/>
    <property type="evidence" value="ECO:0007669"/>
    <property type="project" value="UniProtKB-SubCell"/>
</dbReference>
<dbReference type="GO" id="GO:0045259">
    <property type="term" value="C:proton-transporting ATP synthase complex"/>
    <property type="evidence" value="ECO:0007669"/>
    <property type="project" value="UniProtKB-KW"/>
</dbReference>
<dbReference type="GO" id="GO:0046933">
    <property type="term" value="F:proton-transporting ATP synthase activity, rotational mechanism"/>
    <property type="evidence" value="ECO:0007669"/>
    <property type="project" value="UniProtKB-UniRule"/>
</dbReference>
<dbReference type="Gene3D" id="1.10.520.20">
    <property type="entry name" value="N-terminal domain of the delta subunit of the F1F0-ATP synthase"/>
    <property type="match status" value="1"/>
</dbReference>
<dbReference type="HAMAP" id="MF_01416">
    <property type="entry name" value="ATP_synth_delta_bact"/>
    <property type="match status" value="1"/>
</dbReference>
<dbReference type="InterPro" id="IPR026015">
    <property type="entry name" value="ATP_synth_OSCP/delta_N_sf"/>
</dbReference>
<dbReference type="InterPro" id="IPR000711">
    <property type="entry name" value="ATPase_OSCP/dsu"/>
</dbReference>
<dbReference type="NCBIfam" id="TIGR01145">
    <property type="entry name" value="ATP_synt_delta"/>
    <property type="match status" value="1"/>
</dbReference>
<dbReference type="PANTHER" id="PTHR11910">
    <property type="entry name" value="ATP SYNTHASE DELTA CHAIN"/>
    <property type="match status" value="1"/>
</dbReference>
<dbReference type="Pfam" id="PF00213">
    <property type="entry name" value="OSCP"/>
    <property type="match status" value="1"/>
</dbReference>
<dbReference type="PRINTS" id="PR00125">
    <property type="entry name" value="ATPASEDELTA"/>
</dbReference>
<dbReference type="SUPFAM" id="SSF47928">
    <property type="entry name" value="N-terminal domain of the delta subunit of the F1F0-ATP synthase"/>
    <property type="match status" value="1"/>
</dbReference>
<comment type="function">
    <text evidence="1">F(1)F(0) ATP synthase produces ATP from ADP in the presence of a proton or sodium gradient. F-type ATPases consist of two structural domains, F(1) containing the extramembraneous catalytic core and F(0) containing the membrane proton channel, linked together by a central stalk and a peripheral stalk. During catalysis, ATP synthesis in the catalytic domain of F(1) is coupled via a rotary mechanism of the central stalk subunits to proton translocation.</text>
</comment>
<comment type="function">
    <text evidence="1">This protein is part of the stalk that links CF(0) to CF(1). It either transmits conformational changes from CF(0) to CF(1) or is implicated in proton conduction.</text>
</comment>
<comment type="subunit">
    <text evidence="1">F-type ATPases have 2 components, F(1) - the catalytic core - and F(0) - the membrane proton channel. F(1) has five subunits: alpha(3), beta(3), gamma(1), delta(1), epsilon(1). F(0) has three main subunits: a(1), b(2) and c(10-14). The alpha and beta chains form an alternating ring which encloses part of the gamma chain. F(1) is attached to F(0) by a central stalk formed by the gamma and epsilon chains, while a peripheral stalk is formed by the delta and b chains.</text>
</comment>
<comment type="subcellular location">
    <subcellularLocation>
        <location evidence="1">Cell inner membrane</location>
        <topology evidence="1">Peripheral membrane protein</topology>
    </subcellularLocation>
</comment>
<comment type="similarity">
    <text evidence="1">Belongs to the ATPase delta chain family.</text>
</comment>
<gene>
    <name evidence="1" type="primary">atpH</name>
    <name type="ordered locus">GM21_4038</name>
</gene>
<organism>
    <name type="scientific">Geobacter sp. (strain M21)</name>
    <dbReference type="NCBI Taxonomy" id="443144"/>
    <lineage>
        <taxon>Bacteria</taxon>
        <taxon>Pseudomonadati</taxon>
        <taxon>Thermodesulfobacteriota</taxon>
        <taxon>Desulfuromonadia</taxon>
        <taxon>Geobacterales</taxon>
        <taxon>Geobacteraceae</taxon>
        <taxon>Geobacter</taxon>
    </lineage>
</organism>
<evidence type="ECO:0000255" key="1">
    <source>
        <dbReference type="HAMAP-Rule" id="MF_01416"/>
    </source>
</evidence>